<name>AAEB_ECOLI</name>
<reference key="1">
    <citation type="journal article" date="1997" name="Science">
        <title>The complete genome sequence of Escherichia coli K-12.</title>
        <authorList>
            <person name="Blattner F.R."/>
            <person name="Plunkett G. III"/>
            <person name="Bloch C.A."/>
            <person name="Perna N.T."/>
            <person name="Burland V."/>
            <person name="Riley M."/>
            <person name="Collado-Vides J."/>
            <person name="Glasner J.D."/>
            <person name="Rode C.K."/>
            <person name="Mayhew G.F."/>
            <person name="Gregor J."/>
            <person name="Davis N.W."/>
            <person name="Kirkpatrick H.A."/>
            <person name="Goeden M.A."/>
            <person name="Rose D.J."/>
            <person name="Mau B."/>
            <person name="Shao Y."/>
        </authorList>
    </citation>
    <scope>NUCLEOTIDE SEQUENCE [LARGE SCALE GENOMIC DNA]</scope>
    <source>
        <strain>K12 / MG1655 / ATCC 47076</strain>
    </source>
</reference>
<reference key="2">
    <citation type="journal article" date="2006" name="Mol. Syst. Biol.">
        <title>Highly accurate genome sequences of Escherichia coli K-12 strains MG1655 and W3110.</title>
        <authorList>
            <person name="Hayashi K."/>
            <person name="Morooka N."/>
            <person name="Yamamoto Y."/>
            <person name="Fujita K."/>
            <person name="Isono K."/>
            <person name="Choi S."/>
            <person name="Ohtsubo E."/>
            <person name="Baba T."/>
            <person name="Wanner B.L."/>
            <person name="Mori H."/>
            <person name="Horiuchi T."/>
        </authorList>
    </citation>
    <scope>NUCLEOTIDE SEQUENCE [LARGE SCALE GENOMIC DNA]</scope>
    <source>
        <strain>K12 / W3110 / ATCC 27325 / DSM 5911</strain>
    </source>
</reference>
<reference key="3">
    <citation type="journal article" date="2004" name="J. Bacteriol.">
        <title>Characterization of the Escherichia coli AaeAB efflux pump: a metabolic relief valve?</title>
        <authorList>
            <person name="Van Dyk T.K."/>
            <person name="Templeton L.J."/>
            <person name="Cantera K.A."/>
            <person name="Sharpe P.L."/>
            <person name="Sariaslani F.S."/>
        </authorList>
    </citation>
    <scope>FUNCTION</scope>
    <scope>INDUCTION</scope>
    <source>
        <strain>K12 / MG1655 / ATCC 47076</strain>
    </source>
</reference>
<reference key="4">
    <citation type="journal article" date="2005" name="Science">
        <title>Global topology analysis of the Escherichia coli inner membrane proteome.</title>
        <authorList>
            <person name="Daley D.O."/>
            <person name="Rapp M."/>
            <person name="Granseth E."/>
            <person name="Melen K."/>
            <person name="Drew D."/>
            <person name="von Heijne G."/>
        </authorList>
    </citation>
    <scope>TOPOLOGY [LARGE SCALE ANALYSIS]</scope>
    <source>
        <strain>K12 / MG1655 / ATCC 47076</strain>
    </source>
</reference>
<keyword id="KW-0997">Cell inner membrane</keyword>
<keyword id="KW-1003">Cell membrane</keyword>
<keyword id="KW-0472">Membrane</keyword>
<keyword id="KW-1185">Reference proteome</keyword>
<keyword id="KW-0812">Transmembrane</keyword>
<keyword id="KW-1133">Transmembrane helix</keyword>
<keyword id="KW-0813">Transport</keyword>
<organism>
    <name type="scientific">Escherichia coli (strain K12)</name>
    <dbReference type="NCBI Taxonomy" id="83333"/>
    <lineage>
        <taxon>Bacteria</taxon>
        <taxon>Pseudomonadati</taxon>
        <taxon>Pseudomonadota</taxon>
        <taxon>Gammaproteobacteria</taxon>
        <taxon>Enterobacterales</taxon>
        <taxon>Enterobacteriaceae</taxon>
        <taxon>Escherichia</taxon>
    </lineage>
</organism>
<proteinExistence type="evidence at protein level"/>
<sequence>MGIFSIANQHIRFAVKLATAIVLALFVGFHFQLETPRWAVLTAAIVAAGTAFAAGGEPYSGAIRYRGFLRIIGTFIGCIAGLVIIIAMIRAPLLMILVCCIWAGFCTWISSLVRIENSYAWGLAGYTALIIVITIQPEPLLTPQFAVERCSEIVIGIVCAIMADLLFSPRSIKQEVDRELESLLVAQYQLMQLCIKHGDGEVVDKAWGDLVRRTTALQGMRSNLNMESSRWARANRRLKAINTLSLTLITQSCETYLIQNTRPELITDTFREFFDTPVETAQDVHKQLKRLRRVIAWTGERETPVTIYSWVAAATRYQLLKRGVISNTKINATEEEILQGEPEVKVESAERHHAMVNFWRTTLSCILGTLFWLWTGWTSGSGAMVMIAVVTSLAMRLPNPRMVAIDFIYGTLAALPLGLLYFLVIIPNTQQSMLLLCISLAVLGFFLGIEVQKRRLGSMGALASTINIIVLDNPMTFHFSQFLDSALGQIVGCVLAFTVILLVRDKSRDRTGRVLLNQFVSAAVSAMTTNVARRKENHLPALYQQLFLLMNKFPGDLPKFRLALTMIIAHQRLRDAPIPVNEDLSAFHRQMRRTADHVISARSDDKRRRYFGQLLEELEIYQEKLRIWQAPPQVTEPVNRLAGMLHKYQHALTDS</sequence>
<protein>
    <recommendedName>
        <fullName evidence="2">p-hydroxybenzoic acid efflux pump subunit AaeB</fullName>
        <shortName evidence="2">pHBA efflux pump protein B</shortName>
    </recommendedName>
</protein>
<gene>
    <name evidence="2" type="primary">aaeB</name>
    <name type="synonym">yhcP</name>
    <name type="ordered locus">b3240</name>
    <name type="ordered locus">JW3209</name>
</gene>
<accession>P46481</accession>
<accession>Q2M8X3</accession>
<feature type="chain" id="PRO_0000210077" description="p-hydroxybenzoic acid efflux pump subunit AaeB">
    <location>
        <begin position="1"/>
        <end position="655"/>
    </location>
</feature>
<feature type="topological domain" description="Periplasmic" evidence="1">
    <location>
        <begin position="1"/>
        <end position="12"/>
    </location>
</feature>
<feature type="transmembrane region" description="Helical" evidence="2">
    <location>
        <begin position="13"/>
        <end position="33"/>
    </location>
</feature>
<feature type="topological domain" description="Cytoplasmic" evidence="1">
    <location>
        <begin position="34"/>
        <end position="37"/>
    </location>
</feature>
<feature type="transmembrane region" description="Helical" evidence="2">
    <location>
        <begin position="38"/>
        <end position="58"/>
    </location>
</feature>
<feature type="topological domain" description="Periplasmic" evidence="1">
    <location>
        <begin position="59"/>
        <end position="68"/>
    </location>
</feature>
<feature type="transmembrane region" description="Helical" evidence="2">
    <location>
        <begin position="69"/>
        <end position="89"/>
    </location>
</feature>
<feature type="topological domain" description="Cytoplasmic" evidence="1">
    <location>
        <begin position="90"/>
        <end position="92"/>
    </location>
</feature>
<feature type="transmembrane region" description="Helical" evidence="2">
    <location>
        <begin position="93"/>
        <end position="113"/>
    </location>
</feature>
<feature type="topological domain" description="Periplasmic" evidence="1">
    <location>
        <begin position="114"/>
        <end position="120"/>
    </location>
</feature>
<feature type="transmembrane region" description="Helical" evidence="2">
    <location>
        <begin position="121"/>
        <end position="141"/>
    </location>
</feature>
<feature type="topological domain" description="Cytoplasmic" evidence="1">
    <location>
        <begin position="142"/>
        <end position="151"/>
    </location>
</feature>
<feature type="transmembrane region" description="Helical" evidence="2">
    <location>
        <begin position="152"/>
        <end position="172"/>
    </location>
</feature>
<feature type="topological domain" description="Periplasmic" evidence="1">
    <location>
        <begin position="173"/>
        <end position="369"/>
    </location>
</feature>
<feature type="transmembrane region" description="Helical" evidence="2">
    <location>
        <begin position="370"/>
        <end position="390"/>
    </location>
</feature>
<feature type="topological domain" description="Cytoplasmic" evidence="1">
    <location>
        <begin position="391"/>
        <end position="406"/>
    </location>
</feature>
<feature type="transmembrane region" description="Helical" evidence="2">
    <location>
        <begin position="407"/>
        <end position="427"/>
    </location>
</feature>
<feature type="topological domain" description="Periplasmic" evidence="1">
    <location>
        <begin position="428"/>
        <end position="430"/>
    </location>
</feature>
<feature type="transmembrane region" description="Helical" evidence="2">
    <location>
        <begin position="431"/>
        <end position="451"/>
    </location>
</feature>
<feature type="topological domain" description="Cytoplasmic" evidence="1">
    <location>
        <begin position="452"/>
        <end position="458"/>
    </location>
</feature>
<feature type="transmembrane region" description="Helical" evidence="2">
    <location>
        <begin position="459"/>
        <end position="479"/>
    </location>
</feature>
<feature type="topological domain" description="Periplasmic" evidence="1">
    <location>
        <begin position="480"/>
        <end position="481"/>
    </location>
</feature>
<feature type="transmembrane region" description="Helical" evidence="2">
    <location>
        <begin position="482"/>
        <end position="502"/>
    </location>
</feature>
<feature type="topological domain" description="Cytoplasmic" evidence="1">
    <location>
        <begin position="503"/>
        <end position="655"/>
    </location>
</feature>
<dbReference type="EMBL" id="U18997">
    <property type="protein sequence ID" value="AAA58042.1"/>
    <property type="molecule type" value="Genomic_DNA"/>
</dbReference>
<dbReference type="EMBL" id="U00096">
    <property type="protein sequence ID" value="AAC76272.1"/>
    <property type="molecule type" value="Genomic_DNA"/>
</dbReference>
<dbReference type="EMBL" id="AP009048">
    <property type="protein sequence ID" value="BAE77283.1"/>
    <property type="molecule type" value="Genomic_DNA"/>
</dbReference>
<dbReference type="PIR" id="B65116">
    <property type="entry name" value="B65116"/>
</dbReference>
<dbReference type="RefSeq" id="NP_417707.1">
    <property type="nucleotide sequence ID" value="NC_000913.3"/>
</dbReference>
<dbReference type="RefSeq" id="WP_000510991.1">
    <property type="nucleotide sequence ID" value="NZ_CP064677.1"/>
</dbReference>
<dbReference type="SMR" id="P46481"/>
<dbReference type="BioGRID" id="4263393">
    <property type="interactions" value="385"/>
</dbReference>
<dbReference type="FunCoup" id="P46481">
    <property type="interactions" value="141"/>
</dbReference>
<dbReference type="IntAct" id="P46481">
    <property type="interactions" value="2"/>
</dbReference>
<dbReference type="STRING" id="511145.b3240"/>
<dbReference type="TCDB" id="2.A.85.1.2">
    <property type="family name" value="the aromatic acid exporter (arae) family"/>
</dbReference>
<dbReference type="PaxDb" id="511145-b3240"/>
<dbReference type="EnsemblBacteria" id="AAC76272">
    <property type="protein sequence ID" value="AAC76272"/>
    <property type="gene ID" value="b3240"/>
</dbReference>
<dbReference type="GeneID" id="947747"/>
<dbReference type="KEGG" id="ecj:JW3209"/>
<dbReference type="KEGG" id="eco:b3240"/>
<dbReference type="PATRIC" id="fig|511145.12.peg.3337"/>
<dbReference type="EchoBASE" id="EB2673"/>
<dbReference type="eggNOG" id="COG1289">
    <property type="taxonomic scope" value="Bacteria"/>
</dbReference>
<dbReference type="HOGENOM" id="CLU_027647_0_0_6"/>
<dbReference type="InParanoid" id="P46481"/>
<dbReference type="PhylomeDB" id="P46481"/>
<dbReference type="BioCyc" id="EcoCyc:G7685-MONOMER"/>
<dbReference type="BioCyc" id="MetaCyc:G7685-MONOMER"/>
<dbReference type="PRO" id="PR:P46481"/>
<dbReference type="Proteomes" id="UP000000625">
    <property type="component" value="Chromosome"/>
</dbReference>
<dbReference type="GO" id="GO:0005886">
    <property type="term" value="C:plasma membrane"/>
    <property type="evidence" value="ECO:0000314"/>
    <property type="project" value="EcoCyc"/>
</dbReference>
<dbReference type="GO" id="GO:0022857">
    <property type="term" value="F:transmembrane transporter activity"/>
    <property type="evidence" value="ECO:0007669"/>
    <property type="project" value="UniProtKB-UniRule"/>
</dbReference>
<dbReference type="GO" id="GO:0046942">
    <property type="term" value="P:carboxylic acid transport"/>
    <property type="evidence" value="ECO:0000315"/>
    <property type="project" value="EcoliWiki"/>
</dbReference>
<dbReference type="HAMAP" id="MF_01545">
    <property type="entry name" value="AaeB"/>
    <property type="match status" value="1"/>
</dbReference>
<dbReference type="InterPro" id="IPR006726">
    <property type="entry name" value="PHBA_efflux_AaeB/fusaric-R"/>
</dbReference>
<dbReference type="InterPro" id="IPR023706">
    <property type="entry name" value="PHBA_efflux_pump_AaeB"/>
</dbReference>
<dbReference type="NCBIfam" id="NF007916">
    <property type="entry name" value="PRK10631.1"/>
    <property type="match status" value="1"/>
</dbReference>
<dbReference type="PANTHER" id="PTHR30509:SF9">
    <property type="entry name" value="MULTIDRUG RESISTANCE PROTEIN MDTO"/>
    <property type="match status" value="1"/>
</dbReference>
<dbReference type="PANTHER" id="PTHR30509">
    <property type="entry name" value="P-HYDROXYBENZOIC ACID EFFLUX PUMP SUBUNIT-RELATED"/>
    <property type="match status" value="1"/>
</dbReference>
<dbReference type="Pfam" id="PF04632">
    <property type="entry name" value="FUSC"/>
    <property type="match status" value="1"/>
</dbReference>
<evidence type="ECO:0000255" key="1"/>
<evidence type="ECO:0000255" key="2">
    <source>
        <dbReference type="HAMAP-Rule" id="MF_01545"/>
    </source>
</evidence>
<evidence type="ECO:0000269" key="3">
    <source>
    </source>
</evidence>
<comment type="function">
    <text evidence="2 3">Forms an efflux pump with AaeA. Could function as a metabolic relief valve, allowing to eliminate certain compounds when they accumulate to high levels in the cell. Substrates are p-hydroxybenzoic acid (pHBA), 6-hydroxy-2-naphthoic and 2-hydroxycinnamate.</text>
</comment>
<comment type="subcellular location">
    <subcellularLocation>
        <location>Cell inner membrane</location>
        <topology>Multi-pass membrane protein</topology>
    </subcellularLocation>
</comment>
<comment type="induction">
    <text evidence="2 3">Positively coregulated with aaeA and aaeX by AaeR.</text>
</comment>
<comment type="similarity">
    <text evidence="2">Belongs to the aromatic acid exporter ArAE (TC 2.A.85) family.</text>
</comment>